<evidence type="ECO:0000255" key="1">
    <source>
        <dbReference type="HAMAP-Rule" id="MF_00658"/>
    </source>
</evidence>
<organism>
    <name type="scientific">Haemophilus influenzae (strain ATCC 51907 / DSM 11121 / KW20 / Rd)</name>
    <dbReference type="NCBI Taxonomy" id="71421"/>
    <lineage>
        <taxon>Bacteria</taxon>
        <taxon>Pseudomonadati</taxon>
        <taxon>Pseudomonadota</taxon>
        <taxon>Gammaproteobacteria</taxon>
        <taxon>Pasteurellales</taxon>
        <taxon>Pasteurellaceae</taxon>
        <taxon>Haemophilus</taxon>
    </lineage>
</organism>
<feature type="chain" id="PRO_0000198126" description="Ribosomal RNA large subunit methyltransferase H">
    <location>
        <begin position="1"/>
        <end position="155"/>
    </location>
</feature>
<feature type="binding site" evidence="1">
    <location>
        <position position="72"/>
    </location>
    <ligand>
        <name>S-adenosyl-L-methionine</name>
        <dbReference type="ChEBI" id="CHEBI:59789"/>
    </ligand>
</feature>
<feature type="binding site" evidence="1">
    <location>
        <position position="103"/>
    </location>
    <ligand>
        <name>S-adenosyl-L-methionine</name>
        <dbReference type="ChEBI" id="CHEBI:59789"/>
    </ligand>
</feature>
<feature type="binding site" evidence="1">
    <location>
        <begin position="122"/>
        <end position="127"/>
    </location>
    <ligand>
        <name>S-adenosyl-L-methionine</name>
        <dbReference type="ChEBI" id="CHEBI:59789"/>
    </ligand>
</feature>
<dbReference type="EC" id="2.1.1.177" evidence="1"/>
<dbReference type="EMBL" id="L42023">
    <property type="protein sequence ID" value="AAC21711.1"/>
    <property type="molecule type" value="Genomic_DNA"/>
</dbReference>
<dbReference type="PIR" id="G64140">
    <property type="entry name" value="G64140"/>
</dbReference>
<dbReference type="RefSeq" id="NP_438206.1">
    <property type="nucleotide sequence ID" value="NC_000907.1"/>
</dbReference>
<dbReference type="SMR" id="P44470"/>
<dbReference type="STRING" id="71421.HI_0033"/>
<dbReference type="EnsemblBacteria" id="AAC21711">
    <property type="protein sequence ID" value="AAC21711"/>
    <property type="gene ID" value="HI_0033"/>
</dbReference>
<dbReference type="KEGG" id="hin:HI_0033"/>
<dbReference type="PATRIC" id="fig|71421.8.peg.33"/>
<dbReference type="eggNOG" id="COG1576">
    <property type="taxonomic scope" value="Bacteria"/>
</dbReference>
<dbReference type="HOGENOM" id="CLU_100552_1_0_6"/>
<dbReference type="OrthoDB" id="9806643at2"/>
<dbReference type="PhylomeDB" id="P44470"/>
<dbReference type="BioCyc" id="HINF71421:G1GJ1-33-MONOMER"/>
<dbReference type="Proteomes" id="UP000000579">
    <property type="component" value="Chromosome"/>
</dbReference>
<dbReference type="GO" id="GO:0005737">
    <property type="term" value="C:cytoplasm"/>
    <property type="evidence" value="ECO:0007669"/>
    <property type="project" value="UniProtKB-SubCell"/>
</dbReference>
<dbReference type="GO" id="GO:0070038">
    <property type="term" value="F:rRNA (pseudouridine-N3-)-methyltransferase activity"/>
    <property type="evidence" value="ECO:0007669"/>
    <property type="project" value="UniProtKB-UniRule"/>
</dbReference>
<dbReference type="CDD" id="cd18081">
    <property type="entry name" value="RlmH-like"/>
    <property type="match status" value="1"/>
</dbReference>
<dbReference type="Gene3D" id="3.40.1280.10">
    <property type="match status" value="1"/>
</dbReference>
<dbReference type="HAMAP" id="MF_00658">
    <property type="entry name" value="23SrRNA_methyltr_H"/>
    <property type="match status" value="1"/>
</dbReference>
<dbReference type="InterPro" id="IPR029028">
    <property type="entry name" value="Alpha/beta_knot_MTases"/>
</dbReference>
<dbReference type="InterPro" id="IPR003742">
    <property type="entry name" value="RlmH-like"/>
</dbReference>
<dbReference type="InterPro" id="IPR029026">
    <property type="entry name" value="tRNA_m1G_MTases_N"/>
</dbReference>
<dbReference type="NCBIfam" id="NF000984">
    <property type="entry name" value="PRK00103.1-1"/>
    <property type="match status" value="1"/>
</dbReference>
<dbReference type="NCBIfam" id="NF000986">
    <property type="entry name" value="PRK00103.1-4"/>
    <property type="match status" value="1"/>
</dbReference>
<dbReference type="NCBIfam" id="TIGR00246">
    <property type="entry name" value="tRNA_RlmH_YbeA"/>
    <property type="match status" value="1"/>
</dbReference>
<dbReference type="PANTHER" id="PTHR33603">
    <property type="entry name" value="METHYLTRANSFERASE"/>
    <property type="match status" value="1"/>
</dbReference>
<dbReference type="PANTHER" id="PTHR33603:SF1">
    <property type="entry name" value="RIBOSOMAL RNA LARGE SUBUNIT METHYLTRANSFERASE H"/>
    <property type="match status" value="1"/>
</dbReference>
<dbReference type="Pfam" id="PF02590">
    <property type="entry name" value="SPOUT_MTase"/>
    <property type="match status" value="1"/>
</dbReference>
<dbReference type="PIRSF" id="PIRSF004505">
    <property type="entry name" value="MT_bac"/>
    <property type="match status" value="1"/>
</dbReference>
<dbReference type="SUPFAM" id="SSF75217">
    <property type="entry name" value="alpha/beta knot"/>
    <property type="match status" value="1"/>
</dbReference>
<gene>
    <name evidence="1" type="primary">rlmH</name>
    <name type="ordered locus">HI_0033</name>
</gene>
<sequence length="155" mass="17250">MKITLIAVGTKMPSWVTTGFEEYQRRFPKDMPFELIEIPAGKRGKNADIKRILEQEGKAMLAACGKGKVVTLDIPGKPWTTPQLAEQLEAWKNDGRDVCLLIGGPEGLSPECKAAAEQSWSLSPLTLPHPLVRVVVAESLYRAWSLTTNHPYHRE</sequence>
<keyword id="KW-0963">Cytoplasm</keyword>
<keyword id="KW-0489">Methyltransferase</keyword>
<keyword id="KW-1185">Reference proteome</keyword>
<keyword id="KW-0698">rRNA processing</keyword>
<keyword id="KW-0949">S-adenosyl-L-methionine</keyword>
<keyword id="KW-0808">Transferase</keyword>
<comment type="function">
    <text evidence="1">Specifically methylates the pseudouridine at position 1915 (m3Psi1915) in 23S rRNA.</text>
</comment>
<comment type="catalytic activity">
    <reaction evidence="1">
        <text>pseudouridine(1915) in 23S rRNA + S-adenosyl-L-methionine = N(3)-methylpseudouridine(1915) in 23S rRNA + S-adenosyl-L-homocysteine + H(+)</text>
        <dbReference type="Rhea" id="RHEA:42752"/>
        <dbReference type="Rhea" id="RHEA-COMP:10221"/>
        <dbReference type="Rhea" id="RHEA-COMP:10222"/>
        <dbReference type="ChEBI" id="CHEBI:15378"/>
        <dbReference type="ChEBI" id="CHEBI:57856"/>
        <dbReference type="ChEBI" id="CHEBI:59789"/>
        <dbReference type="ChEBI" id="CHEBI:65314"/>
        <dbReference type="ChEBI" id="CHEBI:74486"/>
        <dbReference type="EC" id="2.1.1.177"/>
    </reaction>
</comment>
<comment type="subunit">
    <text evidence="1">Homodimer.</text>
</comment>
<comment type="subcellular location">
    <subcellularLocation>
        <location evidence="1">Cytoplasm</location>
    </subcellularLocation>
</comment>
<comment type="similarity">
    <text evidence="1">Belongs to the RNA methyltransferase RlmH family.</text>
</comment>
<reference key="1">
    <citation type="journal article" date="1995" name="Science">
        <title>Whole-genome random sequencing and assembly of Haemophilus influenzae Rd.</title>
        <authorList>
            <person name="Fleischmann R.D."/>
            <person name="Adams M.D."/>
            <person name="White O."/>
            <person name="Clayton R.A."/>
            <person name="Kirkness E.F."/>
            <person name="Kerlavage A.R."/>
            <person name="Bult C.J."/>
            <person name="Tomb J.-F."/>
            <person name="Dougherty B.A."/>
            <person name="Merrick J.M."/>
            <person name="McKenney K."/>
            <person name="Sutton G.G."/>
            <person name="FitzHugh W."/>
            <person name="Fields C.A."/>
            <person name="Gocayne J.D."/>
            <person name="Scott J.D."/>
            <person name="Shirley R."/>
            <person name="Liu L.-I."/>
            <person name="Glodek A."/>
            <person name="Kelley J.M."/>
            <person name="Weidman J.F."/>
            <person name="Phillips C.A."/>
            <person name="Spriggs T."/>
            <person name="Hedblom E."/>
            <person name="Cotton M.D."/>
            <person name="Utterback T.R."/>
            <person name="Hanna M.C."/>
            <person name="Nguyen D.T."/>
            <person name="Saudek D.M."/>
            <person name="Brandon R.C."/>
            <person name="Fine L.D."/>
            <person name="Fritchman J.L."/>
            <person name="Fuhrmann J.L."/>
            <person name="Geoghagen N.S.M."/>
            <person name="Gnehm C.L."/>
            <person name="McDonald L.A."/>
            <person name="Small K.V."/>
            <person name="Fraser C.M."/>
            <person name="Smith H.O."/>
            <person name="Venter J.C."/>
        </authorList>
    </citation>
    <scope>NUCLEOTIDE SEQUENCE [LARGE SCALE GENOMIC DNA]</scope>
    <source>
        <strain>ATCC 51907 / DSM 11121 / KW20 / Rd</strain>
    </source>
</reference>
<accession>P44470</accession>
<proteinExistence type="inferred from homology"/>
<name>RLMH_HAEIN</name>
<protein>
    <recommendedName>
        <fullName evidence="1">Ribosomal RNA large subunit methyltransferase H</fullName>
        <ecNumber evidence="1">2.1.1.177</ecNumber>
    </recommendedName>
    <alternativeName>
        <fullName evidence="1">23S rRNA (pseudouridine1915-N3)-methyltransferase</fullName>
    </alternativeName>
    <alternativeName>
        <fullName evidence="1">23S rRNA m3Psi1915 methyltransferase</fullName>
    </alternativeName>
    <alternativeName>
        <fullName evidence="1">rRNA (pseudouridine-N3-)-methyltransferase RlmH</fullName>
    </alternativeName>
</protein>